<proteinExistence type="inferred from homology"/>
<feature type="chain" id="PRO_0000446501" description="Type 4 prepilin-like proteins leader peptide-processing enzyme">
    <location>
        <begin position="1"/>
        <end position="269"/>
    </location>
</feature>
<feature type="transmembrane region" description="Helical" evidence="1">
    <location>
        <begin position="13"/>
        <end position="33"/>
    </location>
</feature>
<feature type="transmembrane region" description="Helical" evidence="1">
    <location>
        <begin position="102"/>
        <end position="122"/>
    </location>
</feature>
<feature type="transmembrane region" description="Helical" evidence="1">
    <location>
        <begin position="124"/>
        <end position="144"/>
    </location>
</feature>
<feature type="transmembrane region" description="Helical" evidence="1">
    <location>
        <begin position="147"/>
        <end position="167"/>
    </location>
</feature>
<feature type="transmembrane region" description="Helical" evidence="1">
    <location>
        <begin position="178"/>
        <end position="198"/>
    </location>
</feature>
<feature type="transmembrane region" description="Helical" evidence="1">
    <location>
        <begin position="210"/>
        <end position="230"/>
    </location>
</feature>
<feature type="transmembrane region" description="Helical" evidence="1">
    <location>
        <begin position="249"/>
        <end position="269"/>
    </location>
</feature>
<dbReference type="EC" id="2.1.1.-" evidence="3"/>
<dbReference type="EC" id="3.4.23.43" evidence="3"/>
<dbReference type="EMBL" id="FN649414">
    <property type="protein sequence ID" value="CBJ02740.1"/>
    <property type="molecule type" value="Genomic_DNA"/>
</dbReference>
<dbReference type="RefSeq" id="WP_014640016.1">
    <property type="nucleotide sequence ID" value="NC_017633.1"/>
</dbReference>
<dbReference type="MEROPS" id="A24.A01"/>
<dbReference type="KEGG" id="elh:ETEC_3240"/>
<dbReference type="HOGENOM" id="CLU_057101_0_0_6"/>
<dbReference type="GO" id="GO:0005886">
    <property type="term" value="C:plasma membrane"/>
    <property type="evidence" value="ECO:0007669"/>
    <property type="project" value="UniProtKB-SubCell"/>
</dbReference>
<dbReference type="GO" id="GO:0004190">
    <property type="term" value="F:aspartic-type endopeptidase activity"/>
    <property type="evidence" value="ECO:0007669"/>
    <property type="project" value="UniProtKB-EC"/>
</dbReference>
<dbReference type="GO" id="GO:0008168">
    <property type="term" value="F:methyltransferase activity"/>
    <property type="evidence" value="ECO:0007669"/>
    <property type="project" value="UniProtKB-KW"/>
</dbReference>
<dbReference type="GO" id="GO:0032259">
    <property type="term" value="P:methylation"/>
    <property type="evidence" value="ECO:0007669"/>
    <property type="project" value="UniProtKB-KW"/>
</dbReference>
<dbReference type="GO" id="GO:0006465">
    <property type="term" value="P:signal peptide processing"/>
    <property type="evidence" value="ECO:0007669"/>
    <property type="project" value="TreeGrafter"/>
</dbReference>
<dbReference type="FunFam" id="1.20.120.1220:FF:000004">
    <property type="entry name" value="Type 4 prepilin-like proteins leader peptide-processing enzyme"/>
    <property type="match status" value="1"/>
</dbReference>
<dbReference type="Gene3D" id="1.20.120.1220">
    <property type="match status" value="1"/>
</dbReference>
<dbReference type="InterPro" id="IPR014032">
    <property type="entry name" value="Peptidase_A24A_bac"/>
</dbReference>
<dbReference type="InterPro" id="IPR000045">
    <property type="entry name" value="Prepilin_IV_endopep_pep"/>
</dbReference>
<dbReference type="InterPro" id="IPR010627">
    <property type="entry name" value="Prepilin_pept_A24_N"/>
</dbReference>
<dbReference type="InterPro" id="IPR050882">
    <property type="entry name" value="Prepilin_peptidase/N-MTase"/>
</dbReference>
<dbReference type="PANTHER" id="PTHR30487:SF0">
    <property type="entry name" value="PREPILIN LEADER PEPTIDASE_N-METHYLTRANSFERASE-RELATED"/>
    <property type="match status" value="1"/>
</dbReference>
<dbReference type="PANTHER" id="PTHR30487">
    <property type="entry name" value="TYPE 4 PREPILIN-LIKE PROTEINS LEADER PEPTIDE-PROCESSING ENZYME"/>
    <property type="match status" value="1"/>
</dbReference>
<dbReference type="Pfam" id="PF06750">
    <property type="entry name" value="A24_N_bact"/>
    <property type="match status" value="1"/>
</dbReference>
<dbReference type="Pfam" id="PF01478">
    <property type="entry name" value="Peptidase_A24"/>
    <property type="match status" value="1"/>
</dbReference>
<dbReference type="PRINTS" id="PR00864">
    <property type="entry name" value="PREPILNPTASE"/>
</dbReference>
<organism>
    <name type="scientific">Escherichia coli O78:H11 (strain H10407 / ETEC)</name>
    <dbReference type="NCBI Taxonomy" id="316401"/>
    <lineage>
        <taxon>Bacteria</taxon>
        <taxon>Pseudomonadati</taxon>
        <taxon>Pseudomonadota</taxon>
        <taxon>Gammaproteobacteria</taxon>
        <taxon>Enterobacterales</taxon>
        <taxon>Enterobacteriaceae</taxon>
        <taxon>Escherichia</taxon>
    </lineage>
</organism>
<reference key="1">
    <citation type="journal article" date="2010" name="J. Bacteriol.">
        <title>A commensal gone bad: complete genome sequence of the prototypical enterotoxigenic Escherichia coli strain H10407.</title>
        <authorList>
            <person name="Crossman L.C."/>
            <person name="Chaudhuri R.R."/>
            <person name="Beatson S.A."/>
            <person name="Wells T.J."/>
            <person name="Desvaux M."/>
            <person name="Cunningham A.F."/>
            <person name="Petty N.K."/>
            <person name="Mahon V."/>
            <person name="Brinkley C."/>
            <person name="Hobman J.L."/>
            <person name="Savarino S.J."/>
            <person name="Turner S.M."/>
            <person name="Pallen M.J."/>
            <person name="Penn C.W."/>
            <person name="Parkhill J."/>
            <person name="Turner A.K."/>
            <person name="Johnson T.J."/>
            <person name="Thomson N.R."/>
            <person name="Smith S.G."/>
            <person name="Henderson I.R."/>
        </authorList>
    </citation>
    <scope>NUCLEOTIDE SEQUENCE [LARGE SCALE GENOMIC DNA]</scope>
    <source>
        <strain>H10407 / ETEC</strain>
    </source>
</reference>
<reference key="2">
    <citation type="journal article" date="2012" name="Infect. Immun.">
        <title>YghG (GspSbeta) is a novel pilot protein required for localization of the GspSbeta type II secretion system secretin of enterotoxigenic Escherichia coli.</title>
        <authorList>
            <person name="Strozen T.G."/>
            <person name="Li G."/>
            <person name="Howard S.P."/>
        </authorList>
    </citation>
    <scope>DISRUPTION PHENOTYPE</scope>
    <source>
        <strain>H10407 / ETEC</strain>
    </source>
</reference>
<accession>E3PJ89</accession>
<comment type="function">
    <text evidence="3">Cleaves type-4 fimbrial leader sequence and methylates the N-terminal (generally Phe) residue.</text>
</comment>
<comment type="catalytic activity">
    <reaction evidence="3">
        <text>Typically cleaves a -Gly-|-Phe- bond to release an N-terminal, basic peptide of 5-8 residues from type IV prepilin, and then N-methylates the new N-terminal amino group, the methyl donor being S-adenosyl-L-methionine.</text>
        <dbReference type="EC" id="3.4.23.43"/>
    </reaction>
</comment>
<comment type="subcellular location">
    <subcellularLocation>
        <location evidence="1">Cell inner membrane</location>
        <topology evidence="1">Multi-pass membrane protein</topology>
    </subcellularLocation>
</comment>
<comment type="disruption phenotype">
    <text evidence="4">No effect on assembly of T2SS-beta, severely reduced secretion of the labile toxin exported by T2SS-beta.</text>
</comment>
<comment type="miscellaneous">
    <text evidence="6">Encoded in a type II secretion system (T2SS-beta); this strain encodes 2 T2SS but only this one (beta) is expressed under standard laboratory conditions.</text>
</comment>
<comment type="similarity">
    <text evidence="2">Belongs to the peptidase A24 family.</text>
</comment>
<evidence type="ECO:0000255" key="1"/>
<evidence type="ECO:0000255" key="2">
    <source>
        <dbReference type="RuleBase" id="RU003793"/>
    </source>
</evidence>
<evidence type="ECO:0000255" key="3">
    <source>
        <dbReference type="RuleBase" id="RU003794"/>
    </source>
</evidence>
<evidence type="ECO:0000269" key="4">
    <source>
    </source>
</evidence>
<evidence type="ECO:0000303" key="5">
    <source>
    </source>
</evidence>
<evidence type="ECO:0000305" key="6">
    <source>
    </source>
</evidence>
<protein>
    <recommendedName>
        <fullName evidence="3">Type 4 prepilin-like proteins leader peptide-processing enzyme</fullName>
        <ecNumber evidence="3">2.1.1.-</ecNumber>
        <ecNumber evidence="3">3.4.23.43</ecNumber>
    </recommendedName>
</protein>
<name>PPPA_ECOH1</name>
<keyword id="KW-0997">Cell inner membrane</keyword>
<keyword id="KW-1003">Cell membrane</keyword>
<keyword id="KW-0378">Hydrolase</keyword>
<keyword id="KW-0472">Membrane</keyword>
<keyword id="KW-0489">Methyltransferase</keyword>
<keyword id="KW-0511">Multifunctional enzyme</keyword>
<keyword id="KW-0645">Protease</keyword>
<keyword id="KW-0808">Transferase</keyword>
<keyword id="KW-0812">Transmembrane</keyword>
<keyword id="KW-1133">Transmembrane helix</keyword>
<gene>
    <name evidence="5" type="primary">pppA</name>
    <name type="ordered locus">ETEC_3240</name>
</gene>
<sequence>MLFDVFQQYPAAMPVLATVGGLIIGSFLNVVIWRYPIMLRQQMAEFHGEMPSVQSKISLALPRSHCPHCQQTIRIRDNIPLLSWLMLKGRCRDCQAKISKRYPLVELLTALAFLLASLVWPESGWALAVMILSAWLIAASVIDLDHQWLPDVFTQGVLWTGLIAAWAQQSPLTLQDAVTGVLVGFIAFYSLRWIAGIVLRKEALGMGDVLLFAALGSWVGPLSLPNVALIASCCGLIYAVITKRGTTTLPFGPCLSLGGIATIYLQALF</sequence>